<evidence type="ECO:0000269" key="1">
    <source>
    </source>
</evidence>
<evidence type="ECO:0000305" key="2"/>
<evidence type="ECO:0000305" key="3">
    <source>
    </source>
</evidence>
<dbReference type="EMBL" id="Z46660">
    <property type="protein sequence ID" value="CAA86649.1"/>
    <property type="molecule type" value="Genomic_DNA"/>
</dbReference>
<dbReference type="EMBL" id="AY693290">
    <property type="protein sequence ID" value="AAT93309.1"/>
    <property type="molecule type" value="Genomic_DNA"/>
</dbReference>
<dbReference type="PIR" id="S49638">
    <property type="entry name" value="S49638"/>
</dbReference>
<dbReference type="DIP" id="DIP-4968N"/>
<dbReference type="IntAct" id="Q04502">
    <property type="interactions" value="1"/>
</dbReference>
<dbReference type="STRING" id="4932.YML089C"/>
<dbReference type="PaxDb" id="4932-YML089C"/>
<dbReference type="EnsemblFungi" id="YML089C_mRNA">
    <property type="protein sequence ID" value="YML089C"/>
    <property type="gene ID" value="YML089C"/>
</dbReference>
<dbReference type="AGR" id="SGD:S000004554"/>
<dbReference type="SGD" id="S000004554">
    <property type="gene designation" value="YML089C"/>
</dbReference>
<dbReference type="HOGENOM" id="CLU_2028524_0_0_1"/>
<accession>Q04502</accession>
<name>YMI9_YEAST</name>
<proteinExistence type="uncertain"/>
<feature type="chain" id="PRO_0000203246" description="Putative uncharacterized protein YML089C">
    <location>
        <begin position="1"/>
        <end position="122"/>
    </location>
</feature>
<comment type="induction">
    <text evidence="1">Induced by calcium shortage.</text>
</comment>
<comment type="miscellaneous">
    <text evidence="2">Partially overlaps YML090W.</text>
</comment>
<comment type="caution">
    <text evidence="3">Product of a dubious gene prediction unlikely to encode a functional protein. Because of that it is not part of the S.cerevisiae S288c complete/reference proteome set.</text>
</comment>
<reference key="1">
    <citation type="journal article" date="1997" name="Nature">
        <title>The nucleotide sequence of Saccharomyces cerevisiae chromosome XIII.</title>
        <authorList>
            <person name="Bowman S."/>
            <person name="Churcher C.M."/>
            <person name="Badcock K."/>
            <person name="Brown D."/>
            <person name="Chillingworth T."/>
            <person name="Connor R."/>
            <person name="Dedman K."/>
            <person name="Devlin K."/>
            <person name="Gentles S."/>
            <person name="Hamlin N."/>
            <person name="Hunt S."/>
            <person name="Jagels K."/>
            <person name="Lye G."/>
            <person name="Moule S."/>
            <person name="Odell C."/>
            <person name="Pearson D."/>
            <person name="Rajandream M.A."/>
            <person name="Rice P."/>
            <person name="Skelton J."/>
            <person name="Walsh S.V."/>
            <person name="Whitehead S."/>
            <person name="Barrell B.G."/>
        </authorList>
    </citation>
    <scope>NUCLEOTIDE SEQUENCE [LARGE SCALE GENOMIC DNA]</scope>
    <source>
        <strain>ATCC 204508 / S288c</strain>
    </source>
</reference>
<reference key="2">
    <citation type="journal article" date="2014" name="G3 (Bethesda)">
        <title>The reference genome sequence of Saccharomyces cerevisiae: Then and now.</title>
        <authorList>
            <person name="Engel S.R."/>
            <person name="Dietrich F.S."/>
            <person name="Fisk D.G."/>
            <person name="Binkley G."/>
            <person name="Balakrishnan R."/>
            <person name="Costanzo M.C."/>
            <person name="Dwight S.S."/>
            <person name="Hitz B.C."/>
            <person name="Karra K."/>
            <person name="Nash R.S."/>
            <person name="Weng S."/>
            <person name="Wong E.D."/>
            <person name="Lloyd P."/>
            <person name="Skrzypek M.S."/>
            <person name="Miyasato S.R."/>
            <person name="Simison M."/>
            <person name="Cherry J.M."/>
        </authorList>
    </citation>
    <scope>GENOME REANNOTATION</scope>
    <source>
        <strain>ATCC 204508 / S288c</strain>
    </source>
</reference>
<reference key="3">
    <citation type="journal article" date="2007" name="Genome Res.">
        <title>Approaching a complete repository of sequence-verified protein-encoding clones for Saccharomyces cerevisiae.</title>
        <authorList>
            <person name="Hu Y."/>
            <person name="Rolfs A."/>
            <person name="Bhullar B."/>
            <person name="Murthy T.V.S."/>
            <person name="Zhu C."/>
            <person name="Berger M.F."/>
            <person name="Camargo A.A."/>
            <person name="Kelley F."/>
            <person name="McCarron S."/>
            <person name="Jepson D."/>
            <person name="Richardson A."/>
            <person name="Raphael J."/>
            <person name="Moreira D."/>
            <person name="Taycher E."/>
            <person name="Zuo D."/>
            <person name="Mohr S."/>
            <person name="Kane M.F."/>
            <person name="Williamson J."/>
            <person name="Simpson A.J.G."/>
            <person name="Bulyk M.L."/>
            <person name="Harlow E."/>
            <person name="Marsischky G."/>
            <person name="Kolodner R.D."/>
            <person name="LaBaer J."/>
        </authorList>
    </citation>
    <scope>NUCLEOTIDE SEQUENCE [GENOMIC DNA]</scope>
    <source>
        <strain>ATCC 204508 / S288c</strain>
    </source>
</reference>
<reference key="4">
    <citation type="journal article" date="2002" name="Cell Calcium">
        <title>Genome-wide analysis of yeast transcription upon calcium shortage.</title>
        <authorList>
            <person name="Lombardia L.J."/>
            <person name="Becerra M."/>
            <person name="Rodriguez-Belmonte E."/>
            <person name="Hauser N.C."/>
            <person name="Cerdan M.E."/>
        </authorList>
    </citation>
    <scope>INDUCTION</scope>
</reference>
<gene>
    <name type="ordered locus">YML089C</name>
</gene>
<protein>
    <recommendedName>
        <fullName>Putative uncharacterized protein YML089C</fullName>
    </recommendedName>
</protein>
<organism>
    <name type="scientific">Saccharomyces cerevisiae (strain ATCC 204508 / S288c)</name>
    <name type="common">Baker's yeast</name>
    <dbReference type="NCBI Taxonomy" id="559292"/>
    <lineage>
        <taxon>Eukaryota</taxon>
        <taxon>Fungi</taxon>
        <taxon>Dikarya</taxon>
        <taxon>Ascomycota</taxon>
        <taxon>Saccharomycotina</taxon>
        <taxon>Saccharomycetes</taxon>
        <taxon>Saccharomycetales</taxon>
        <taxon>Saccharomycetaceae</taxon>
        <taxon>Saccharomyces</taxon>
    </lineage>
</organism>
<sequence length="122" mass="14167">MPHAWQSCIFDSFSRFVELFLAYNKQRLYFRSSPLLTAEFLRLTNEMQERTKSGAAPNARVLIGQALGAETRCALQFPHDKAKTVSFPRIIHTSITNPWIKLSLVRPYYTFLFSCMLYKIDP</sequence>